<dbReference type="EC" id="4.3.1.18" evidence="1"/>
<dbReference type="EMBL" id="CP000243">
    <property type="protein sequence ID" value="ABE08163.1"/>
    <property type="molecule type" value="Genomic_DNA"/>
</dbReference>
<dbReference type="SMR" id="Q1R901"/>
<dbReference type="KEGG" id="eci:UTI89_C2697"/>
<dbReference type="HOGENOM" id="CLU_035707_0_0_6"/>
<dbReference type="Proteomes" id="UP000001952">
    <property type="component" value="Chromosome"/>
</dbReference>
<dbReference type="GO" id="GO:0008721">
    <property type="term" value="F:D-serine ammonia-lyase activity"/>
    <property type="evidence" value="ECO:0007669"/>
    <property type="project" value="UniProtKB-EC"/>
</dbReference>
<dbReference type="GO" id="GO:0016836">
    <property type="term" value="F:hydro-lyase activity"/>
    <property type="evidence" value="ECO:0007669"/>
    <property type="project" value="UniProtKB-UniRule"/>
</dbReference>
<dbReference type="GO" id="GO:0030170">
    <property type="term" value="F:pyridoxal phosphate binding"/>
    <property type="evidence" value="ECO:0007669"/>
    <property type="project" value="InterPro"/>
</dbReference>
<dbReference type="GO" id="GO:0036088">
    <property type="term" value="P:D-serine catabolic process"/>
    <property type="evidence" value="ECO:0007669"/>
    <property type="project" value="TreeGrafter"/>
</dbReference>
<dbReference type="GO" id="GO:0009097">
    <property type="term" value="P:isoleucine biosynthetic process"/>
    <property type="evidence" value="ECO:0007669"/>
    <property type="project" value="TreeGrafter"/>
</dbReference>
<dbReference type="CDD" id="cd06447">
    <property type="entry name" value="D-Ser-dehyd"/>
    <property type="match status" value="1"/>
</dbReference>
<dbReference type="FunFam" id="3.40.50.1100:FF:000018">
    <property type="entry name" value="D-serine dehydratase"/>
    <property type="match status" value="1"/>
</dbReference>
<dbReference type="Gene3D" id="3.40.50.1100">
    <property type="match status" value="2"/>
</dbReference>
<dbReference type="HAMAP" id="MF_01030">
    <property type="entry name" value="D_Ser_dehydrat"/>
    <property type="match status" value="1"/>
</dbReference>
<dbReference type="InterPro" id="IPR011780">
    <property type="entry name" value="D_Ser_am_lyase"/>
</dbReference>
<dbReference type="InterPro" id="IPR050147">
    <property type="entry name" value="Ser/Thr_Dehydratase"/>
</dbReference>
<dbReference type="InterPro" id="IPR000634">
    <property type="entry name" value="Ser/Thr_deHydtase_PyrdxlP-BS"/>
</dbReference>
<dbReference type="InterPro" id="IPR001926">
    <property type="entry name" value="TrpB-like_PALP"/>
</dbReference>
<dbReference type="InterPro" id="IPR036052">
    <property type="entry name" value="TrpB-like_PALP_sf"/>
</dbReference>
<dbReference type="NCBIfam" id="TIGR02035">
    <property type="entry name" value="D_Ser_am_lyase"/>
    <property type="match status" value="1"/>
</dbReference>
<dbReference type="NCBIfam" id="NF002823">
    <property type="entry name" value="PRK02991.1"/>
    <property type="match status" value="1"/>
</dbReference>
<dbReference type="PANTHER" id="PTHR48078:SF9">
    <property type="entry name" value="D-SERINE DEHYDRATASE"/>
    <property type="match status" value="1"/>
</dbReference>
<dbReference type="PANTHER" id="PTHR48078">
    <property type="entry name" value="THREONINE DEHYDRATASE, MITOCHONDRIAL-RELATED"/>
    <property type="match status" value="1"/>
</dbReference>
<dbReference type="Pfam" id="PF00291">
    <property type="entry name" value="PALP"/>
    <property type="match status" value="1"/>
</dbReference>
<dbReference type="SUPFAM" id="SSF53686">
    <property type="entry name" value="Tryptophan synthase beta subunit-like PLP-dependent enzymes"/>
    <property type="match status" value="1"/>
</dbReference>
<dbReference type="PROSITE" id="PS00165">
    <property type="entry name" value="DEHYDRATASE_SER_THR"/>
    <property type="match status" value="1"/>
</dbReference>
<comment type="catalytic activity">
    <reaction evidence="1">
        <text>D-serine = pyruvate + NH4(+)</text>
        <dbReference type="Rhea" id="RHEA:13977"/>
        <dbReference type="ChEBI" id="CHEBI:15361"/>
        <dbReference type="ChEBI" id="CHEBI:28938"/>
        <dbReference type="ChEBI" id="CHEBI:35247"/>
        <dbReference type="EC" id="4.3.1.18"/>
    </reaction>
</comment>
<comment type="cofactor">
    <cofactor evidence="1">
        <name>pyridoxal 5'-phosphate</name>
        <dbReference type="ChEBI" id="CHEBI:597326"/>
    </cofactor>
</comment>
<comment type="subunit">
    <text evidence="1">Monomer.</text>
</comment>
<comment type="similarity">
    <text evidence="1">Belongs to the serine/threonine dehydratase family. DsdA subfamily.</text>
</comment>
<evidence type="ECO:0000255" key="1">
    <source>
        <dbReference type="HAMAP-Rule" id="MF_01030"/>
    </source>
</evidence>
<accession>Q1R901</accession>
<sequence length="442" mass="47878">MENAKMNSLIAQYPLVEDLVALKETTWFNPGTTSLAEGLPYVGLTEQDVQDAHARLSRFAPYLAKAFPETAAAGGIIESELVAIPAMQKRLEKEYHQPIAGQLLLKKDSHLPISGSIKARGGIYEVLAHAEKLALEAGLLTLEDDYSKLLSPEFKQFFSQYSIAVGSTGNLGLSIGIMSARIGFKVTVHMSADARAWKKAKLRSHGVTVVEYEQDYGVAVEEGRKAAQSDPNCFFIDDENSRTLFLGYSVAGQRLKAQFAQQGRIVNADNPLFVYLPCGVGGGPGGVAFGLKLAFGDHVHCFFAEPTHSPCMLLGVHTGLHDQISVQDIGIDNLTAADGLAVGRASGFVGRAMERLLDGFYTLSDQTMYDMLSWLAQEEGIRLEPSALAGMAGPQRVCASVSYQQMHGFSAEQLRNATHLVWATGGGMVPEEEMNQYLAKGR</sequence>
<keyword id="KW-0456">Lyase</keyword>
<keyword id="KW-0663">Pyridoxal phosphate</keyword>
<organism>
    <name type="scientific">Escherichia coli (strain UTI89 / UPEC)</name>
    <dbReference type="NCBI Taxonomy" id="364106"/>
    <lineage>
        <taxon>Bacteria</taxon>
        <taxon>Pseudomonadati</taxon>
        <taxon>Pseudomonadota</taxon>
        <taxon>Gammaproteobacteria</taxon>
        <taxon>Enterobacterales</taxon>
        <taxon>Enterobacteriaceae</taxon>
        <taxon>Escherichia</taxon>
    </lineage>
</organism>
<proteinExistence type="inferred from homology"/>
<gene>
    <name evidence="1" type="primary">dsdA1</name>
    <name type="ordered locus">UTI89_C2697</name>
</gene>
<name>SDHD1_ECOUT</name>
<protein>
    <recommendedName>
        <fullName evidence="1">D-serine dehydratase 1</fullName>
        <ecNumber evidence="1">4.3.1.18</ecNumber>
    </recommendedName>
    <alternativeName>
        <fullName evidence="1">D-serine deaminase 1</fullName>
        <shortName evidence="1">DSD 1</shortName>
    </alternativeName>
</protein>
<feature type="chain" id="PRO_0000291726" description="D-serine dehydratase 1">
    <location>
        <begin position="1"/>
        <end position="442"/>
    </location>
</feature>
<feature type="modified residue" description="N6-(pyridoxal phosphate)lysine" evidence="1">
    <location>
        <position position="118"/>
    </location>
</feature>
<reference key="1">
    <citation type="journal article" date="2006" name="Proc. Natl. Acad. Sci. U.S.A.">
        <title>Identification of genes subject to positive selection in uropathogenic strains of Escherichia coli: a comparative genomics approach.</title>
        <authorList>
            <person name="Chen S.L."/>
            <person name="Hung C.-S."/>
            <person name="Xu J."/>
            <person name="Reigstad C.S."/>
            <person name="Magrini V."/>
            <person name="Sabo A."/>
            <person name="Blasiar D."/>
            <person name="Bieri T."/>
            <person name="Meyer R.R."/>
            <person name="Ozersky P."/>
            <person name="Armstrong J.R."/>
            <person name="Fulton R.S."/>
            <person name="Latreille J.P."/>
            <person name="Spieth J."/>
            <person name="Hooton T.M."/>
            <person name="Mardis E.R."/>
            <person name="Hultgren S.J."/>
            <person name="Gordon J.I."/>
        </authorList>
    </citation>
    <scope>NUCLEOTIDE SEQUENCE [LARGE SCALE GENOMIC DNA]</scope>
    <source>
        <strain>UTI89 / UPEC</strain>
    </source>
</reference>